<feature type="chain" id="PRO_0000297325" description="3-methyl-2-oxobutanoate hydroxymethyltransferase">
    <location>
        <begin position="1"/>
        <end position="257"/>
    </location>
</feature>
<feature type="active site" description="Proton acceptor" evidence="1">
    <location>
        <position position="185"/>
    </location>
</feature>
<feature type="binding site" evidence="1">
    <location>
        <begin position="42"/>
        <end position="43"/>
    </location>
    <ligand>
        <name>3-methyl-2-oxobutanoate</name>
        <dbReference type="ChEBI" id="CHEBI:11851"/>
    </ligand>
</feature>
<feature type="binding site" evidence="1">
    <location>
        <position position="42"/>
    </location>
    <ligand>
        <name>Mg(2+)</name>
        <dbReference type="ChEBI" id="CHEBI:18420"/>
    </ligand>
</feature>
<feature type="binding site" evidence="1">
    <location>
        <position position="86"/>
    </location>
    <ligand>
        <name>3-methyl-2-oxobutanoate</name>
        <dbReference type="ChEBI" id="CHEBI:11851"/>
    </ligand>
</feature>
<feature type="binding site" evidence="1">
    <location>
        <position position="86"/>
    </location>
    <ligand>
        <name>Mg(2+)</name>
        <dbReference type="ChEBI" id="CHEBI:18420"/>
    </ligand>
</feature>
<feature type="binding site" evidence="1">
    <location>
        <position position="116"/>
    </location>
    <ligand>
        <name>3-methyl-2-oxobutanoate</name>
        <dbReference type="ChEBI" id="CHEBI:11851"/>
    </ligand>
</feature>
<feature type="binding site" evidence="1">
    <location>
        <position position="118"/>
    </location>
    <ligand>
        <name>Mg(2+)</name>
        <dbReference type="ChEBI" id="CHEBI:18420"/>
    </ligand>
</feature>
<organism>
    <name type="scientific">Prochlorococcus marinus (strain MIT 9312)</name>
    <dbReference type="NCBI Taxonomy" id="74546"/>
    <lineage>
        <taxon>Bacteria</taxon>
        <taxon>Bacillati</taxon>
        <taxon>Cyanobacteriota</taxon>
        <taxon>Cyanophyceae</taxon>
        <taxon>Synechococcales</taxon>
        <taxon>Prochlorococcaceae</taxon>
        <taxon>Prochlorococcus</taxon>
    </lineage>
</organism>
<gene>
    <name evidence="1" type="primary">panB</name>
    <name type="ordered locus">PMT9312_1406</name>
</gene>
<accession>Q319H9</accession>
<reference key="1">
    <citation type="journal article" date="2006" name="Science">
        <title>Genomic islands and the ecology and evolution of Prochlorococcus.</title>
        <authorList>
            <person name="Coleman M.L."/>
            <person name="Sullivan M.B."/>
            <person name="Martiny A.C."/>
            <person name="Steglich C."/>
            <person name="Barry K."/>
            <person name="Delong E.F."/>
            <person name="Chisholm S.W."/>
        </authorList>
    </citation>
    <scope>NUCLEOTIDE SEQUENCE [LARGE SCALE GENOMIC DNA]</scope>
    <source>
        <strain>MIT 9312</strain>
    </source>
</reference>
<proteinExistence type="inferred from homology"/>
<dbReference type="EC" id="2.1.2.11" evidence="1"/>
<dbReference type="EMBL" id="CP000111">
    <property type="protein sequence ID" value="ABB50466.1"/>
    <property type="molecule type" value="Genomic_DNA"/>
</dbReference>
<dbReference type="RefSeq" id="WP_011376952.1">
    <property type="nucleotide sequence ID" value="NC_007577.1"/>
</dbReference>
<dbReference type="SMR" id="Q319H9"/>
<dbReference type="STRING" id="74546.PMT9312_1406"/>
<dbReference type="KEGG" id="pmi:PMT9312_1406"/>
<dbReference type="eggNOG" id="COG0413">
    <property type="taxonomic scope" value="Bacteria"/>
</dbReference>
<dbReference type="HOGENOM" id="CLU_036645_1_0_3"/>
<dbReference type="OrthoDB" id="9781789at2"/>
<dbReference type="UniPathway" id="UPA00028">
    <property type="reaction ID" value="UER00003"/>
</dbReference>
<dbReference type="Proteomes" id="UP000002715">
    <property type="component" value="Chromosome"/>
</dbReference>
<dbReference type="GO" id="GO:0005737">
    <property type="term" value="C:cytoplasm"/>
    <property type="evidence" value="ECO:0007669"/>
    <property type="project" value="UniProtKB-SubCell"/>
</dbReference>
<dbReference type="GO" id="GO:0003864">
    <property type="term" value="F:3-methyl-2-oxobutanoate hydroxymethyltransferase activity"/>
    <property type="evidence" value="ECO:0007669"/>
    <property type="project" value="UniProtKB-UniRule"/>
</dbReference>
<dbReference type="GO" id="GO:0000287">
    <property type="term" value="F:magnesium ion binding"/>
    <property type="evidence" value="ECO:0007669"/>
    <property type="project" value="TreeGrafter"/>
</dbReference>
<dbReference type="GO" id="GO:0015940">
    <property type="term" value="P:pantothenate biosynthetic process"/>
    <property type="evidence" value="ECO:0007669"/>
    <property type="project" value="UniProtKB-UniRule"/>
</dbReference>
<dbReference type="CDD" id="cd06557">
    <property type="entry name" value="KPHMT-like"/>
    <property type="match status" value="1"/>
</dbReference>
<dbReference type="Gene3D" id="3.20.20.60">
    <property type="entry name" value="Phosphoenolpyruvate-binding domains"/>
    <property type="match status" value="1"/>
</dbReference>
<dbReference type="HAMAP" id="MF_00156">
    <property type="entry name" value="PanB"/>
    <property type="match status" value="1"/>
</dbReference>
<dbReference type="InterPro" id="IPR003700">
    <property type="entry name" value="Pantoate_hydroxy_MeTrfase"/>
</dbReference>
<dbReference type="InterPro" id="IPR015813">
    <property type="entry name" value="Pyrv/PenolPyrv_kinase-like_dom"/>
</dbReference>
<dbReference type="InterPro" id="IPR040442">
    <property type="entry name" value="Pyrv_kinase-like_dom_sf"/>
</dbReference>
<dbReference type="NCBIfam" id="TIGR00222">
    <property type="entry name" value="panB"/>
    <property type="match status" value="1"/>
</dbReference>
<dbReference type="NCBIfam" id="NF001452">
    <property type="entry name" value="PRK00311.1"/>
    <property type="match status" value="1"/>
</dbReference>
<dbReference type="PANTHER" id="PTHR20881">
    <property type="entry name" value="3-METHYL-2-OXOBUTANOATE HYDROXYMETHYLTRANSFERASE"/>
    <property type="match status" value="1"/>
</dbReference>
<dbReference type="PANTHER" id="PTHR20881:SF0">
    <property type="entry name" value="3-METHYL-2-OXOBUTANOATE HYDROXYMETHYLTRANSFERASE"/>
    <property type="match status" value="1"/>
</dbReference>
<dbReference type="Pfam" id="PF02548">
    <property type="entry name" value="Pantoate_transf"/>
    <property type="match status" value="1"/>
</dbReference>
<dbReference type="PIRSF" id="PIRSF000388">
    <property type="entry name" value="Pantoate_hydroxy_MeTrfase"/>
    <property type="match status" value="1"/>
</dbReference>
<dbReference type="SUPFAM" id="SSF51621">
    <property type="entry name" value="Phosphoenolpyruvate/pyruvate domain"/>
    <property type="match status" value="1"/>
</dbReference>
<protein>
    <recommendedName>
        <fullName evidence="1">3-methyl-2-oxobutanoate hydroxymethyltransferase</fullName>
        <ecNumber evidence="1">2.1.2.11</ecNumber>
    </recommendedName>
    <alternativeName>
        <fullName evidence="1">Ketopantoate hydroxymethyltransferase</fullName>
        <shortName evidence="1">KPHMT</shortName>
    </alternativeName>
</protein>
<sequence length="257" mass="28412">MLPSDLVKYKEQSQKIIALTAWDSISGSIAEQANVDLVLVGDSLAMVCLGYKSTLPLTLENIIYHTNAVSRGFKKKIEEQPLLVTDMPFLTYQCGEDKAVEYAGKIIQSTYAKAVKVEGAEPEIQKVISRLIRMGIPVMGHIGLTPQSYLNLGLKKQGESLESQEKIKKDASILEKLGCFSIVLEHMPELLAKEIQNNLTIPTIGIGAGNFCDGQVRVTADLLGLNDDQPPFCQPIIQGKHLFKDKLKEWVDSERLN</sequence>
<evidence type="ECO:0000255" key="1">
    <source>
        <dbReference type="HAMAP-Rule" id="MF_00156"/>
    </source>
</evidence>
<name>PANB_PROM9</name>
<comment type="function">
    <text evidence="1">Catalyzes the reversible reaction in which hydroxymethyl group from 5,10-methylenetetrahydrofolate is transferred onto alpha-ketoisovalerate to form ketopantoate.</text>
</comment>
<comment type="catalytic activity">
    <reaction evidence="1">
        <text>3-methyl-2-oxobutanoate + (6R)-5,10-methylene-5,6,7,8-tetrahydrofolate + H2O = 2-dehydropantoate + (6S)-5,6,7,8-tetrahydrofolate</text>
        <dbReference type="Rhea" id="RHEA:11824"/>
        <dbReference type="ChEBI" id="CHEBI:11561"/>
        <dbReference type="ChEBI" id="CHEBI:11851"/>
        <dbReference type="ChEBI" id="CHEBI:15377"/>
        <dbReference type="ChEBI" id="CHEBI:15636"/>
        <dbReference type="ChEBI" id="CHEBI:57453"/>
        <dbReference type="EC" id="2.1.2.11"/>
    </reaction>
</comment>
<comment type="cofactor">
    <cofactor evidence="1">
        <name>Mg(2+)</name>
        <dbReference type="ChEBI" id="CHEBI:18420"/>
    </cofactor>
    <text evidence="1">Binds 1 Mg(2+) ion per subunit.</text>
</comment>
<comment type="pathway">
    <text evidence="1">Cofactor biosynthesis; (R)-pantothenate biosynthesis; (R)-pantoate from 3-methyl-2-oxobutanoate: step 1/2.</text>
</comment>
<comment type="subunit">
    <text evidence="1">Homodecamer; pentamer of dimers.</text>
</comment>
<comment type="subcellular location">
    <subcellularLocation>
        <location evidence="1">Cytoplasm</location>
    </subcellularLocation>
</comment>
<comment type="similarity">
    <text evidence="1">Belongs to the PanB family.</text>
</comment>
<keyword id="KW-0963">Cytoplasm</keyword>
<keyword id="KW-0460">Magnesium</keyword>
<keyword id="KW-0479">Metal-binding</keyword>
<keyword id="KW-0566">Pantothenate biosynthesis</keyword>
<keyword id="KW-0808">Transferase</keyword>